<protein>
    <recommendedName>
        <fullName evidence="1">Putative glutamate--cysteine ligase 2</fullName>
        <ecNumber evidence="1">6.3.2.2</ecNumber>
    </recommendedName>
    <alternativeName>
        <fullName evidence="1">Gamma-glutamylcysteine synthetase 2</fullName>
        <shortName evidence="1">GCS 2</shortName>
        <shortName evidence="1">Gamma-GCS 2</shortName>
    </alternativeName>
</protein>
<keyword id="KW-0067">ATP-binding</keyword>
<keyword id="KW-0436">Ligase</keyword>
<keyword id="KW-0547">Nucleotide-binding</keyword>
<dbReference type="EC" id="6.3.2.2" evidence="1"/>
<dbReference type="EMBL" id="CP000964">
    <property type="protein sequence ID" value="ACI07356.1"/>
    <property type="molecule type" value="Genomic_DNA"/>
</dbReference>
<dbReference type="SMR" id="B5Y035"/>
<dbReference type="KEGG" id="kpe:KPK_4022"/>
<dbReference type="HOGENOM" id="CLU_044848_1_1_6"/>
<dbReference type="BioCyc" id="KPNE507522:GI0B-4004-MONOMER"/>
<dbReference type="Proteomes" id="UP000001734">
    <property type="component" value="Chromosome"/>
</dbReference>
<dbReference type="GO" id="GO:0005524">
    <property type="term" value="F:ATP binding"/>
    <property type="evidence" value="ECO:0007669"/>
    <property type="project" value="UniProtKB-KW"/>
</dbReference>
<dbReference type="GO" id="GO:0004357">
    <property type="term" value="F:glutamate-cysteine ligase activity"/>
    <property type="evidence" value="ECO:0007669"/>
    <property type="project" value="UniProtKB-EC"/>
</dbReference>
<dbReference type="GO" id="GO:0042398">
    <property type="term" value="P:modified amino acid biosynthetic process"/>
    <property type="evidence" value="ECO:0007669"/>
    <property type="project" value="InterPro"/>
</dbReference>
<dbReference type="Gene3D" id="3.30.590.20">
    <property type="match status" value="1"/>
</dbReference>
<dbReference type="HAMAP" id="MF_01609">
    <property type="entry name" value="Glu_cys_ligase_2"/>
    <property type="match status" value="1"/>
</dbReference>
<dbReference type="InterPro" id="IPR050141">
    <property type="entry name" value="GCL_type2/YbdK_subfam"/>
</dbReference>
<dbReference type="InterPro" id="IPR006336">
    <property type="entry name" value="GCS2"/>
</dbReference>
<dbReference type="InterPro" id="IPR014746">
    <property type="entry name" value="Gln_synth/guanido_kin_cat_dom"/>
</dbReference>
<dbReference type="InterPro" id="IPR011793">
    <property type="entry name" value="YbdK"/>
</dbReference>
<dbReference type="NCBIfam" id="TIGR02050">
    <property type="entry name" value="gshA_cyan_rel"/>
    <property type="match status" value="1"/>
</dbReference>
<dbReference type="NCBIfam" id="NF010040">
    <property type="entry name" value="PRK13516.1"/>
    <property type="match status" value="1"/>
</dbReference>
<dbReference type="PANTHER" id="PTHR36510">
    <property type="entry name" value="GLUTAMATE--CYSTEINE LIGASE 2-RELATED"/>
    <property type="match status" value="1"/>
</dbReference>
<dbReference type="PANTHER" id="PTHR36510:SF1">
    <property type="entry name" value="GLUTAMATE--CYSTEINE LIGASE 2-RELATED"/>
    <property type="match status" value="1"/>
</dbReference>
<dbReference type="Pfam" id="PF04107">
    <property type="entry name" value="GCS2"/>
    <property type="match status" value="1"/>
</dbReference>
<dbReference type="SUPFAM" id="SSF55931">
    <property type="entry name" value="Glutamine synthetase/guanido kinase"/>
    <property type="match status" value="1"/>
</dbReference>
<accession>B5Y035</accession>
<sequence>MPLADFHRSDPFTLGIELELQVVNPPGYDLSQDASTLIADVQHQLTVGEAKHDITESMLEIATGVCRDISHAQTQLSAIQQAVQRAALRHHLQICGGGSHPFHAWQRQQISDNPRYVKTVEHFGYLAQQATVFGQHVHVGCQSGDDALYLLHGLSRFVPHFIALNAASPWFDSTDSRFACSRLNRFSSYPDNGPMPWVADWQGFRRLFRQLSYTSMIDSMKDLHWDIRPSPQFGTVEVRVMDTPLTLAQAIHIAGFIQTLACWLLTERPFKHQPDDYLLYPFNRYQACRYGLDGTLTDVRSGEQRSIRQEILQLADRLAPFAHQLKATAALEAVVRQAKSPHSEAQQMRDFIANGGSLSGLVQKHCEIWAA</sequence>
<feature type="chain" id="PRO_1000148223" description="Putative glutamate--cysteine ligase 2">
    <location>
        <begin position="1"/>
        <end position="371"/>
    </location>
</feature>
<evidence type="ECO:0000255" key="1">
    <source>
        <dbReference type="HAMAP-Rule" id="MF_01609"/>
    </source>
</evidence>
<gene>
    <name type="ordered locus">KPK_4022</name>
</gene>
<comment type="function">
    <text evidence="1">ATP-dependent carboxylate-amine ligase which exhibits weak glutamate--cysteine ligase activity.</text>
</comment>
<comment type="catalytic activity">
    <reaction evidence="1">
        <text>L-cysteine + L-glutamate + ATP = gamma-L-glutamyl-L-cysteine + ADP + phosphate + H(+)</text>
        <dbReference type="Rhea" id="RHEA:13285"/>
        <dbReference type="ChEBI" id="CHEBI:15378"/>
        <dbReference type="ChEBI" id="CHEBI:29985"/>
        <dbReference type="ChEBI" id="CHEBI:30616"/>
        <dbReference type="ChEBI" id="CHEBI:35235"/>
        <dbReference type="ChEBI" id="CHEBI:43474"/>
        <dbReference type="ChEBI" id="CHEBI:58173"/>
        <dbReference type="ChEBI" id="CHEBI:456216"/>
        <dbReference type="EC" id="6.3.2.2"/>
    </reaction>
</comment>
<comment type="subunit">
    <text evidence="1">Homodimer.</text>
</comment>
<comment type="similarity">
    <text evidence="1">Belongs to the glutamate--cysteine ligase type 2 family. YbdK subfamily.</text>
</comment>
<proteinExistence type="inferred from homology"/>
<name>GCS2_KLEP3</name>
<organism>
    <name type="scientific">Klebsiella pneumoniae (strain 342)</name>
    <dbReference type="NCBI Taxonomy" id="507522"/>
    <lineage>
        <taxon>Bacteria</taxon>
        <taxon>Pseudomonadati</taxon>
        <taxon>Pseudomonadota</taxon>
        <taxon>Gammaproteobacteria</taxon>
        <taxon>Enterobacterales</taxon>
        <taxon>Enterobacteriaceae</taxon>
        <taxon>Klebsiella/Raoultella group</taxon>
        <taxon>Klebsiella</taxon>
        <taxon>Klebsiella pneumoniae complex</taxon>
    </lineage>
</organism>
<reference key="1">
    <citation type="journal article" date="2008" name="PLoS Genet.">
        <title>Complete genome sequence of the N2-fixing broad host range endophyte Klebsiella pneumoniae 342 and virulence predictions verified in mice.</title>
        <authorList>
            <person name="Fouts D.E."/>
            <person name="Tyler H.L."/>
            <person name="DeBoy R.T."/>
            <person name="Daugherty S."/>
            <person name="Ren Q."/>
            <person name="Badger J.H."/>
            <person name="Durkin A.S."/>
            <person name="Huot H."/>
            <person name="Shrivastava S."/>
            <person name="Kothari S."/>
            <person name="Dodson R.J."/>
            <person name="Mohamoud Y."/>
            <person name="Khouri H."/>
            <person name="Roesch L.F.W."/>
            <person name="Krogfelt K.A."/>
            <person name="Struve C."/>
            <person name="Triplett E.W."/>
            <person name="Methe B.A."/>
        </authorList>
    </citation>
    <scope>NUCLEOTIDE SEQUENCE [LARGE SCALE GENOMIC DNA]</scope>
    <source>
        <strain>342</strain>
    </source>
</reference>